<protein>
    <recommendedName>
        <fullName>Profilin-2</fullName>
    </recommendedName>
    <alternativeName>
        <fullName>Pollen allergen Ole e 2</fullName>
    </alternativeName>
    <allergenName>Ole e 2</allergenName>
</protein>
<organism>
    <name type="scientific">Olea europaea</name>
    <name type="common">Common olive</name>
    <dbReference type="NCBI Taxonomy" id="4146"/>
    <lineage>
        <taxon>Eukaryota</taxon>
        <taxon>Viridiplantae</taxon>
        <taxon>Streptophyta</taxon>
        <taxon>Embryophyta</taxon>
        <taxon>Tracheophyta</taxon>
        <taxon>Spermatophyta</taxon>
        <taxon>Magnoliopsida</taxon>
        <taxon>eudicotyledons</taxon>
        <taxon>Gunneridae</taxon>
        <taxon>Pentapetalae</taxon>
        <taxon>asterids</taxon>
        <taxon>lamiids</taxon>
        <taxon>Lamiales</taxon>
        <taxon>Oleaceae</taxon>
        <taxon>Oleeae</taxon>
        <taxon>Olea</taxon>
    </lineage>
</organism>
<sequence>MSWQTYVDDHLMCDIEGHEGHRLTAAAIVGHDGSVWAQSATFPQFKPEEMNGIMTDFNEPGHLAPTGLHLGGTKYMVIQGEAGAVIRGKKGSGGITIKKTGQALVCGIYEEPVTPGQCNMVVERLGDYLLEQGL</sequence>
<evidence type="ECO:0000250" key="1"/>
<evidence type="ECO:0000305" key="2"/>
<accession>P0DKF9</accession>
<accession>A4GDQ9</accession>
<name>PROAR_OLEEU</name>
<proteinExistence type="evidence at protein level"/>
<comment type="function">
    <text evidence="1">Binds to actin and affects the structure of the cytoskeleton. At high concentrations, profilin prevents the polymerization of actin, whereas it enhances it at low concentrations (By similarity).</text>
</comment>
<comment type="subunit">
    <text evidence="1">Occurs in many kinds of cells as a complex with monomeric actin in a 1:1 ratio.</text>
</comment>
<comment type="subcellular location">
    <subcellularLocation>
        <location evidence="1">Cytoplasm</location>
        <location evidence="1">Cytoskeleton</location>
    </subcellularLocation>
</comment>
<comment type="PTM">
    <text evidence="1">Phosphorylated by MAP kinases.</text>
</comment>
<comment type="polymorphism">
    <text>Several isoforms of the allergen exist due to polymorphism.</text>
</comment>
<comment type="allergen">
    <text>Causes an allergic reaction in human.</text>
</comment>
<comment type="similarity">
    <text evidence="2">Belongs to the profilin family.</text>
</comment>
<dbReference type="EMBL" id="EF541379">
    <property type="protein sequence ID" value="ABP58625.1"/>
    <property type="molecule type" value="mRNA"/>
</dbReference>
<dbReference type="SMR" id="P0DKF9"/>
<dbReference type="GO" id="GO:0005938">
    <property type="term" value="C:cell cortex"/>
    <property type="evidence" value="ECO:0007669"/>
    <property type="project" value="TreeGrafter"/>
</dbReference>
<dbReference type="GO" id="GO:0005856">
    <property type="term" value="C:cytoskeleton"/>
    <property type="evidence" value="ECO:0007669"/>
    <property type="project" value="UniProtKB-SubCell"/>
</dbReference>
<dbReference type="GO" id="GO:0003785">
    <property type="term" value="F:actin monomer binding"/>
    <property type="evidence" value="ECO:0007669"/>
    <property type="project" value="TreeGrafter"/>
</dbReference>
<dbReference type="CDD" id="cd00148">
    <property type="entry name" value="PROF"/>
    <property type="match status" value="1"/>
</dbReference>
<dbReference type="FunFam" id="3.30.450.30:FF:000001">
    <property type="entry name" value="Profilin"/>
    <property type="match status" value="1"/>
</dbReference>
<dbReference type="Gene3D" id="3.30.450.30">
    <property type="entry name" value="Dynein light chain 2a, cytoplasmic"/>
    <property type="match status" value="1"/>
</dbReference>
<dbReference type="InterPro" id="IPR048278">
    <property type="entry name" value="PFN"/>
</dbReference>
<dbReference type="InterPro" id="IPR005455">
    <property type="entry name" value="PFN_euk"/>
</dbReference>
<dbReference type="InterPro" id="IPR036140">
    <property type="entry name" value="PFN_sf"/>
</dbReference>
<dbReference type="InterPro" id="IPR027310">
    <property type="entry name" value="Profilin_CS"/>
</dbReference>
<dbReference type="PANTHER" id="PTHR11604">
    <property type="entry name" value="PROFILIN"/>
    <property type="match status" value="1"/>
</dbReference>
<dbReference type="PANTHER" id="PTHR11604:SF25">
    <property type="entry name" value="PROFILIN-5"/>
    <property type="match status" value="1"/>
</dbReference>
<dbReference type="Pfam" id="PF00235">
    <property type="entry name" value="Profilin"/>
    <property type="match status" value="1"/>
</dbReference>
<dbReference type="PRINTS" id="PR00392">
    <property type="entry name" value="PROFILIN"/>
</dbReference>
<dbReference type="PRINTS" id="PR01640">
    <property type="entry name" value="PROFILINPLNT"/>
</dbReference>
<dbReference type="SMART" id="SM00392">
    <property type="entry name" value="PROF"/>
    <property type="match status" value="1"/>
</dbReference>
<dbReference type="SUPFAM" id="SSF55770">
    <property type="entry name" value="Profilin (actin-binding protein)"/>
    <property type="match status" value="1"/>
</dbReference>
<dbReference type="PROSITE" id="PS00414">
    <property type="entry name" value="PROFILIN"/>
    <property type="match status" value="1"/>
</dbReference>
<reference key="1">
    <citation type="submission" date="2007-03" db="EMBL/GenBank/DDBJ databases">
        <title>Isoforms of pollen allergens in two widespread olive cultivars from Iran.</title>
        <authorList>
            <person name="Soleimani A."/>
            <person name="Jimenez-Lopez J.C."/>
            <person name="Rodriguez-Garcia M.I."/>
            <person name="Alche J."/>
        </authorList>
    </citation>
    <scope>NUCLEOTIDE SEQUENCE [MRNA]</scope>
    <source>
        <strain>cv. Rowghani</strain>
    </source>
</reference>
<keyword id="KW-0009">Actin-binding</keyword>
<keyword id="KW-0020">Allergen</keyword>
<keyword id="KW-0963">Cytoplasm</keyword>
<keyword id="KW-0206">Cytoskeleton</keyword>
<keyword id="KW-1015">Disulfide bond</keyword>
<keyword id="KW-0597">Phosphoprotein</keyword>
<feature type="initiator methionine" description="Removed" evidence="1">
    <location>
        <position position="1"/>
    </location>
</feature>
<feature type="chain" id="PRO_0000425009" description="Profilin-2">
    <location>
        <begin position="2"/>
        <end position="134"/>
    </location>
</feature>
<feature type="short sequence motif" description="Involved in PIP2 interaction">
    <location>
        <begin position="84"/>
        <end position="100"/>
    </location>
</feature>
<feature type="modified residue" description="Phosphothreonine" evidence="1">
    <location>
        <position position="114"/>
    </location>
</feature>
<feature type="disulfide bond" evidence="2">
    <location>
        <begin position="13"/>
        <end position="118"/>
    </location>
</feature>